<gene>
    <name type="ORF">SPAC1B2.06</name>
</gene>
<feature type="chain" id="PRO_0000416645" description="Uncharacterized protein C1B2.06">
    <location>
        <begin position="1"/>
        <end position="84"/>
    </location>
</feature>
<accession>G2TRL6</accession>
<dbReference type="EMBL" id="CU329670">
    <property type="protein sequence ID" value="CCD31321.1"/>
    <property type="molecule type" value="Genomic_DNA"/>
</dbReference>
<dbReference type="RefSeq" id="XP_004001776.1">
    <property type="nucleotide sequence ID" value="XM_004001727.1"/>
</dbReference>
<dbReference type="PaxDb" id="4896-SPAC1B2.06.1"/>
<dbReference type="EnsemblFungi" id="SPAC1B2.06.1">
    <property type="protein sequence ID" value="SPAC1B2.06.1:pep"/>
    <property type="gene ID" value="SPAC1B2.06"/>
</dbReference>
<dbReference type="PomBase" id="SPAC1B2.06"/>
<dbReference type="VEuPathDB" id="FungiDB:SPAC1B2.06"/>
<dbReference type="HOGENOM" id="CLU_2528755_0_0_1"/>
<dbReference type="InParanoid" id="G2TRL6"/>
<dbReference type="PRO" id="PR:G2TRL6"/>
<dbReference type="Proteomes" id="UP000002485">
    <property type="component" value="Chromosome I"/>
</dbReference>
<organism>
    <name type="scientific">Schizosaccharomyces pombe (strain 972 / ATCC 24843)</name>
    <name type="common">Fission yeast</name>
    <dbReference type="NCBI Taxonomy" id="284812"/>
    <lineage>
        <taxon>Eukaryota</taxon>
        <taxon>Fungi</taxon>
        <taxon>Dikarya</taxon>
        <taxon>Ascomycota</taxon>
        <taxon>Taphrinomycotina</taxon>
        <taxon>Schizosaccharomycetes</taxon>
        <taxon>Schizosaccharomycetales</taxon>
        <taxon>Schizosaccharomycetaceae</taxon>
        <taxon>Schizosaccharomyces</taxon>
    </lineage>
</organism>
<protein>
    <recommendedName>
        <fullName>Uncharacterized protein C1B2.06</fullName>
    </recommendedName>
</protein>
<name>YKF6_SCHPO</name>
<reference key="1">
    <citation type="journal article" date="2002" name="Nature">
        <title>The genome sequence of Schizosaccharomyces pombe.</title>
        <authorList>
            <person name="Wood V."/>
            <person name="Gwilliam R."/>
            <person name="Rajandream M.A."/>
            <person name="Lyne M.H."/>
            <person name="Lyne R."/>
            <person name="Stewart A."/>
            <person name="Sgouros J.G."/>
            <person name="Peat N."/>
            <person name="Hayles J."/>
            <person name="Baker S.G."/>
            <person name="Basham D."/>
            <person name="Bowman S."/>
            <person name="Brooks K."/>
            <person name="Brown D."/>
            <person name="Brown S."/>
            <person name="Chillingworth T."/>
            <person name="Churcher C.M."/>
            <person name="Collins M."/>
            <person name="Connor R."/>
            <person name="Cronin A."/>
            <person name="Davis P."/>
            <person name="Feltwell T."/>
            <person name="Fraser A."/>
            <person name="Gentles S."/>
            <person name="Goble A."/>
            <person name="Hamlin N."/>
            <person name="Harris D.E."/>
            <person name="Hidalgo J."/>
            <person name="Hodgson G."/>
            <person name="Holroyd S."/>
            <person name="Hornsby T."/>
            <person name="Howarth S."/>
            <person name="Huckle E.J."/>
            <person name="Hunt S."/>
            <person name="Jagels K."/>
            <person name="James K.D."/>
            <person name="Jones L."/>
            <person name="Jones M."/>
            <person name="Leather S."/>
            <person name="McDonald S."/>
            <person name="McLean J."/>
            <person name="Mooney P."/>
            <person name="Moule S."/>
            <person name="Mungall K.L."/>
            <person name="Murphy L.D."/>
            <person name="Niblett D."/>
            <person name="Odell C."/>
            <person name="Oliver K."/>
            <person name="O'Neil S."/>
            <person name="Pearson D."/>
            <person name="Quail M.A."/>
            <person name="Rabbinowitsch E."/>
            <person name="Rutherford K.M."/>
            <person name="Rutter S."/>
            <person name="Saunders D."/>
            <person name="Seeger K."/>
            <person name="Sharp S."/>
            <person name="Skelton J."/>
            <person name="Simmonds M.N."/>
            <person name="Squares R."/>
            <person name="Squares S."/>
            <person name="Stevens K."/>
            <person name="Taylor K."/>
            <person name="Taylor R.G."/>
            <person name="Tivey A."/>
            <person name="Walsh S.V."/>
            <person name="Warren T."/>
            <person name="Whitehead S."/>
            <person name="Woodward J.R."/>
            <person name="Volckaert G."/>
            <person name="Aert R."/>
            <person name="Robben J."/>
            <person name="Grymonprez B."/>
            <person name="Weltjens I."/>
            <person name="Vanstreels E."/>
            <person name="Rieger M."/>
            <person name="Schaefer M."/>
            <person name="Mueller-Auer S."/>
            <person name="Gabel C."/>
            <person name="Fuchs M."/>
            <person name="Duesterhoeft A."/>
            <person name="Fritzc C."/>
            <person name="Holzer E."/>
            <person name="Moestl D."/>
            <person name="Hilbert H."/>
            <person name="Borzym K."/>
            <person name="Langer I."/>
            <person name="Beck A."/>
            <person name="Lehrach H."/>
            <person name="Reinhardt R."/>
            <person name="Pohl T.M."/>
            <person name="Eger P."/>
            <person name="Zimmermann W."/>
            <person name="Wedler H."/>
            <person name="Wambutt R."/>
            <person name="Purnelle B."/>
            <person name="Goffeau A."/>
            <person name="Cadieu E."/>
            <person name="Dreano S."/>
            <person name="Gloux S."/>
            <person name="Lelaure V."/>
            <person name="Mottier S."/>
            <person name="Galibert F."/>
            <person name="Aves S.J."/>
            <person name="Xiang Z."/>
            <person name="Hunt C."/>
            <person name="Moore K."/>
            <person name="Hurst S.M."/>
            <person name="Lucas M."/>
            <person name="Rochet M."/>
            <person name="Gaillardin C."/>
            <person name="Tallada V.A."/>
            <person name="Garzon A."/>
            <person name="Thode G."/>
            <person name="Daga R.R."/>
            <person name="Cruzado L."/>
            <person name="Jimenez J."/>
            <person name="Sanchez M."/>
            <person name="del Rey F."/>
            <person name="Benito J."/>
            <person name="Dominguez A."/>
            <person name="Revuelta J.L."/>
            <person name="Moreno S."/>
            <person name="Armstrong J."/>
            <person name="Forsburg S.L."/>
            <person name="Cerutti L."/>
            <person name="Lowe T."/>
            <person name="McCombie W.R."/>
            <person name="Paulsen I."/>
            <person name="Potashkin J."/>
            <person name="Shpakovski G.V."/>
            <person name="Ussery D."/>
            <person name="Barrell B.G."/>
            <person name="Nurse P."/>
        </authorList>
    </citation>
    <scope>NUCLEOTIDE SEQUENCE [LARGE SCALE GENOMIC DNA]</scope>
    <source>
        <strain>972 / ATCC 24843</strain>
    </source>
</reference>
<reference key="2">
    <citation type="journal article" date="2011" name="Science">
        <title>Comparative functional genomics of the fission yeasts.</title>
        <authorList>
            <person name="Rhind N."/>
            <person name="Chen Z."/>
            <person name="Yassour M."/>
            <person name="Thompson D.A."/>
            <person name="Haas B.J."/>
            <person name="Habib N."/>
            <person name="Wapinski I."/>
            <person name="Roy S."/>
            <person name="Lin M.F."/>
            <person name="Heiman D.I."/>
            <person name="Young S.K."/>
            <person name="Furuya K."/>
            <person name="Guo Y."/>
            <person name="Pidoux A."/>
            <person name="Chen H.M."/>
            <person name="Robbertse B."/>
            <person name="Goldberg J.M."/>
            <person name="Aoki K."/>
            <person name="Bayne E.H."/>
            <person name="Berlin A.M."/>
            <person name="Desjardins C.A."/>
            <person name="Dobbs E."/>
            <person name="Dukaj L."/>
            <person name="Fan L."/>
            <person name="FitzGerald M.G."/>
            <person name="French C."/>
            <person name="Gujja S."/>
            <person name="Hansen K."/>
            <person name="Keifenheim D."/>
            <person name="Levin J.Z."/>
            <person name="Mosher R.A."/>
            <person name="Mueller C.A."/>
            <person name="Pfiffner J."/>
            <person name="Priest M."/>
            <person name="Russ C."/>
            <person name="Smialowska A."/>
            <person name="Swoboda P."/>
            <person name="Sykes S.M."/>
            <person name="Vaughn M."/>
            <person name="Vengrova S."/>
            <person name="Yoder R."/>
            <person name="Zeng Q."/>
            <person name="Allshire R."/>
            <person name="Baulcombe D."/>
            <person name="Birren B.W."/>
            <person name="Brown W."/>
            <person name="Ekwall K."/>
            <person name="Kellis M."/>
            <person name="Leatherwood J."/>
            <person name="Levin H."/>
            <person name="Margalit H."/>
            <person name="Martienssen R."/>
            <person name="Nieduszynski C.A."/>
            <person name="Spatafora J.W."/>
            <person name="Friedman N."/>
            <person name="Dalgaard J.Z."/>
            <person name="Baumann P."/>
            <person name="Niki H."/>
            <person name="Regev A."/>
            <person name="Nusbaum C."/>
        </authorList>
    </citation>
    <scope>IDENTIFICATION</scope>
</reference>
<proteinExistence type="predicted"/>
<sequence>MPKAHPKCEILEPSELLTFTKSSSYSSYFFARLCAIVQSICCTIRVCAIILIDYRLLVFTIGPHHKINGERWILNFPPSVKVCL</sequence>
<keyword id="KW-1185">Reference proteome</keyword>